<gene>
    <name type="primary">gxcDD</name>
    <name type="ORF">DDB_G0279733</name>
</gene>
<organism>
    <name type="scientific">Dictyostelium discoideum</name>
    <name type="common">Social amoeba</name>
    <dbReference type="NCBI Taxonomy" id="44689"/>
    <lineage>
        <taxon>Eukaryota</taxon>
        <taxon>Amoebozoa</taxon>
        <taxon>Evosea</taxon>
        <taxon>Eumycetozoa</taxon>
        <taxon>Dictyostelia</taxon>
        <taxon>Dictyosteliales</taxon>
        <taxon>Dictyosteliaceae</taxon>
        <taxon>Dictyostelium</taxon>
    </lineage>
</organism>
<sequence>MQPKDYMSSSHANWENIQIDSFTSWINQHLSERGLSVKDLSVDFQDGVLLLNLLEILSGKKIARYVRSPKFLQHKIDNIMIAFNFMEKAFDIKVFGCNAKDIVDGNLKQTMGVIFLLIQKIKVNLHLDHLQEQQGETTGTTTTITSTNTTTTPTKPRFYRASMQVNAANRFSHISPNKDQSSSTVATTTTTSTSVVQPQPQPTTATPTTTTATTLTPPVASQQPVSTAPATVTPSTVIPTVTPLNTTTTTTTATSTSTNVPTATTNVPPTATTTTTGTRISPTTGVSVSTIRSKFLFEGGTGNTTGGNEKYNTYSPGSGNTSGVVGPSTSSSLNISSERVLKRTESGYLISGGLSLSGSGSGGIHEPLQRTVSLIEIKLNDHQSKFYDLKKIIFMQSVIRGYLVRSKWRNVLEKYKQHLNEYKKHFMNNKKAYRGLIRVQAIVKGKIQRKKLFKMFPLYRRNEIVKEILSTEDKYVTSLAMVTTHYLKPSEAFLSTQQVRSIFSQIEIIHRYNSLILEKLVSRNKIWYSSGQKIGDIFIEMSAFLKVYTIYVNNYNNSIQTITECMEIPKFASLLEKNRNQFGLDLSAFLIAPIQRIPRYILLLQDLLKNTKESHPDHQDLSLALKKMKDVAEYVNEKKREAENLNQVLTIQSSLTGKFNNLAEPHRRYVKKGTLISNDKIHLYFLFNDLLVKTENKIVSKIRDSARLSNNNSSDKNSKSTFHSPKEIINEGKSKYLNSYFLAGSSLVDSNPDGFTFQIIGVGDANELNSQINNQINNQNNNQNNNQNNNLNNNNDDSPILSFSPFSSSFASTITNSLSSIGNSNNVNNNNNTSSNSGFVNSSNNNINIVNSNGSSPLTNSGHGLNSSFGISSNNNNNLTMPTTSIQLEALSLNEKMTWMGELDECIFQLLEKSKSKKRSLITDADELTTVPFDISVVKDSEFSNVLEKKHSEISWRSKKFYLKNTHLYYHRYSSTESPKEPTKIKCINLILCSVKLAQVVDHPHCFQLITPSRIYFFSCEDSTVLFQWISLIRLSIKKKLESLKDENNNINNFTSIASATSPTSSSSNTTPIVVPIASHSNATGSLSASLGSSFLNQQQRSLEQQQHLNTSNSNLTPLALSSQVLYHINNFISTSTSTSASQSQSQSPSPSPSHSINQKQKIRKLSFYQSRSNTLININNDEDRLNSFPTSTLSVSCLLNNDNHGNNDFDGKSFTNNIDITTTTTTNDDNNNNTTTTQVKKGKDLSCSKELNCSISHDDNSKGSSGYGNNSCGDNINNDESNNNCAECGASDPSWVSINYGVVVCLDCSSIHKNLPEGNVKSVRSLSVAFSDIVKKQEGNIKANNKYEKNIPSGLTKPNPKDSYEIKLSWIKAKYINNNNNNNNSQNGDSTTPTPTPTSTTIHVNNDSTPTSPNLNSQSSPPPTATTTQTENVKLDNGRSSPTPTPTQTENNNNNVLTPTTTTTNTTTSTTTGSRPTTPTILNNEEEHIQGINLKDSTDTSNGKGTWSRGSSHAITERKTSFLDKPRVPVKKEHQGYLFKTSSPTSNNSSDWKKYLFVYKNDVLTYYKVSKKNKRKEKGIIDLFHSVKQESRPKQKYSFTLVTSQRLYFLASETEEEMKIWLDVLSSHTTH</sequence>
<dbReference type="EMBL" id="AAFI02000032">
    <property type="protein sequence ID" value="EAS66880.2"/>
    <property type="status" value="ALT_SEQ"/>
    <property type="molecule type" value="Genomic_DNA"/>
</dbReference>
<dbReference type="RefSeq" id="XP_001134564.2">
    <property type="nucleotide sequence ID" value="XM_001134564.2"/>
</dbReference>
<dbReference type="SMR" id="Q1ZXH8"/>
<dbReference type="FunCoup" id="Q1ZXH8">
    <property type="interactions" value="23"/>
</dbReference>
<dbReference type="STRING" id="44689.Q1ZXH8"/>
<dbReference type="GlyGen" id="Q1ZXH8">
    <property type="glycosylation" value="5 sites"/>
</dbReference>
<dbReference type="PaxDb" id="44689-DDB0233183"/>
<dbReference type="EnsemblProtists" id="EAS66880">
    <property type="protein sequence ID" value="EAS66880"/>
    <property type="gene ID" value="DDB_G0279733"/>
</dbReference>
<dbReference type="GeneID" id="8622170"/>
<dbReference type="KEGG" id="ddi:DDB_G0279733"/>
<dbReference type="dictyBase" id="DDB_G0279733">
    <property type="gene designation" value="gxcDD"/>
</dbReference>
<dbReference type="VEuPathDB" id="AmoebaDB:DDB_G0279733"/>
<dbReference type="eggNOG" id="KOG0518">
    <property type="taxonomic scope" value="Eukaryota"/>
</dbReference>
<dbReference type="eggNOG" id="KOG0703">
    <property type="taxonomic scope" value="Eukaryota"/>
</dbReference>
<dbReference type="eggNOG" id="KOG3522">
    <property type="taxonomic scope" value="Eukaryota"/>
</dbReference>
<dbReference type="InParanoid" id="Q1ZXH8"/>
<dbReference type="PRO" id="PR:Q1ZXH8"/>
<dbReference type="Proteomes" id="UP000002195">
    <property type="component" value="Chromosome 3"/>
</dbReference>
<dbReference type="GO" id="GO:0005938">
    <property type="term" value="C:cell cortex"/>
    <property type="evidence" value="ECO:0000315"/>
    <property type="project" value="dictyBase"/>
</dbReference>
<dbReference type="GO" id="GO:0005737">
    <property type="term" value="C:cytoplasm"/>
    <property type="evidence" value="ECO:0000314"/>
    <property type="project" value="dictyBase"/>
</dbReference>
<dbReference type="GO" id="GO:0005856">
    <property type="term" value="C:cytoskeleton"/>
    <property type="evidence" value="ECO:0000314"/>
    <property type="project" value="dictyBase"/>
</dbReference>
<dbReference type="GO" id="GO:0032009">
    <property type="term" value="C:early phagosome"/>
    <property type="evidence" value="ECO:0000315"/>
    <property type="project" value="dictyBase"/>
</dbReference>
<dbReference type="GO" id="GO:0016020">
    <property type="term" value="C:membrane"/>
    <property type="evidence" value="ECO:0000314"/>
    <property type="project" value="dictyBase"/>
</dbReference>
<dbReference type="GO" id="GO:0030670">
    <property type="term" value="C:phagocytic vesicle membrane"/>
    <property type="evidence" value="ECO:0007669"/>
    <property type="project" value="UniProtKB-SubCell"/>
</dbReference>
<dbReference type="GO" id="GO:0005096">
    <property type="term" value="F:GTPase activator activity"/>
    <property type="evidence" value="ECO:0007669"/>
    <property type="project" value="UniProtKB-KW"/>
</dbReference>
<dbReference type="GO" id="GO:0005085">
    <property type="term" value="F:guanyl-nucleotide exchange factor activity"/>
    <property type="evidence" value="ECO:0000318"/>
    <property type="project" value="GO_Central"/>
</dbReference>
<dbReference type="GO" id="GO:0005547">
    <property type="term" value="F:phosphatidylinositol-3,4,5-trisphosphate binding"/>
    <property type="evidence" value="ECO:0000314"/>
    <property type="project" value="dictyBase"/>
</dbReference>
<dbReference type="GO" id="GO:0031267">
    <property type="term" value="F:small GTPase binding"/>
    <property type="evidence" value="ECO:0000314"/>
    <property type="project" value="dictyBase"/>
</dbReference>
<dbReference type="GO" id="GO:0008270">
    <property type="term" value="F:zinc ion binding"/>
    <property type="evidence" value="ECO:0007669"/>
    <property type="project" value="UniProtKB-KW"/>
</dbReference>
<dbReference type="GO" id="GO:0031152">
    <property type="term" value="P:aggregation involved in sorocarp development"/>
    <property type="evidence" value="ECO:0000315"/>
    <property type="project" value="dictyBase"/>
</dbReference>
<dbReference type="GO" id="GO:0035556">
    <property type="term" value="P:intracellular signal transduction"/>
    <property type="evidence" value="ECO:0007669"/>
    <property type="project" value="InterPro"/>
</dbReference>
<dbReference type="GO" id="GO:0030587">
    <property type="term" value="P:sorocarp development"/>
    <property type="evidence" value="ECO:0000315"/>
    <property type="project" value="dictyBase"/>
</dbReference>
<dbReference type="CDD" id="cd00821">
    <property type="entry name" value="PH"/>
    <property type="match status" value="1"/>
</dbReference>
<dbReference type="CDD" id="cd00160">
    <property type="entry name" value="RhoGEF"/>
    <property type="match status" value="1"/>
</dbReference>
<dbReference type="FunFam" id="1.20.900.10:FF:000003">
    <property type="entry name" value="Rho guanine nucleotide exchange factor 10 like"/>
    <property type="match status" value="1"/>
</dbReference>
<dbReference type="Gene3D" id="1.10.220.150">
    <property type="entry name" value="Arf GTPase activating protein"/>
    <property type="match status" value="1"/>
</dbReference>
<dbReference type="Gene3D" id="1.10.418.10">
    <property type="entry name" value="Calponin-like domain"/>
    <property type="match status" value="1"/>
</dbReference>
<dbReference type="Gene3D" id="1.20.900.10">
    <property type="entry name" value="Dbl homology (DH) domain"/>
    <property type="match status" value="1"/>
</dbReference>
<dbReference type="Gene3D" id="2.30.29.30">
    <property type="entry name" value="Pleckstrin-homology domain (PH domain)/Phosphotyrosine-binding domain (PTB)"/>
    <property type="match status" value="3"/>
</dbReference>
<dbReference type="InterPro" id="IPR037278">
    <property type="entry name" value="ARFGAP/RecO"/>
</dbReference>
<dbReference type="InterPro" id="IPR001164">
    <property type="entry name" value="ArfGAP_dom"/>
</dbReference>
<dbReference type="InterPro" id="IPR038508">
    <property type="entry name" value="ArfGAP_dom_sf"/>
</dbReference>
<dbReference type="InterPro" id="IPR001715">
    <property type="entry name" value="CH_dom"/>
</dbReference>
<dbReference type="InterPro" id="IPR036872">
    <property type="entry name" value="CH_dom_sf"/>
</dbReference>
<dbReference type="InterPro" id="IPR035899">
    <property type="entry name" value="DBL_dom_sf"/>
</dbReference>
<dbReference type="InterPro" id="IPR000219">
    <property type="entry name" value="DH_dom"/>
</dbReference>
<dbReference type="InterPro" id="IPR051092">
    <property type="entry name" value="FYVE_RhoGEF_PH"/>
</dbReference>
<dbReference type="InterPro" id="IPR001331">
    <property type="entry name" value="GDS_CDC24_CS"/>
</dbReference>
<dbReference type="InterPro" id="IPR011993">
    <property type="entry name" value="PH-like_dom_sf"/>
</dbReference>
<dbReference type="InterPro" id="IPR001849">
    <property type="entry name" value="PH_domain"/>
</dbReference>
<dbReference type="PANTHER" id="PTHR12673:SF245">
    <property type="entry name" value="DH DOMAIN-CONTAINING PROTEIN-RELATED"/>
    <property type="match status" value="1"/>
</dbReference>
<dbReference type="PANTHER" id="PTHR12673">
    <property type="entry name" value="FACIOGENITAL DYSPLASIA PROTEIN"/>
    <property type="match status" value="1"/>
</dbReference>
<dbReference type="Pfam" id="PF01412">
    <property type="entry name" value="ArfGap"/>
    <property type="match status" value="1"/>
</dbReference>
<dbReference type="Pfam" id="PF00307">
    <property type="entry name" value="CH"/>
    <property type="match status" value="1"/>
</dbReference>
<dbReference type="Pfam" id="PF00169">
    <property type="entry name" value="PH"/>
    <property type="match status" value="2"/>
</dbReference>
<dbReference type="Pfam" id="PF00621">
    <property type="entry name" value="RhoGEF"/>
    <property type="match status" value="1"/>
</dbReference>
<dbReference type="PRINTS" id="PR00405">
    <property type="entry name" value="REVINTRACTNG"/>
</dbReference>
<dbReference type="SMART" id="SM00105">
    <property type="entry name" value="ArfGap"/>
    <property type="match status" value="1"/>
</dbReference>
<dbReference type="SMART" id="SM00033">
    <property type="entry name" value="CH"/>
    <property type="match status" value="1"/>
</dbReference>
<dbReference type="SMART" id="SM00233">
    <property type="entry name" value="PH"/>
    <property type="match status" value="3"/>
</dbReference>
<dbReference type="SMART" id="SM00325">
    <property type="entry name" value="RhoGEF"/>
    <property type="match status" value="1"/>
</dbReference>
<dbReference type="SUPFAM" id="SSF57863">
    <property type="entry name" value="ArfGap/RecO-like zinc finger"/>
    <property type="match status" value="1"/>
</dbReference>
<dbReference type="SUPFAM" id="SSF47576">
    <property type="entry name" value="Calponin-homology domain, CH-domain"/>
    <property type="match status" value="1"/>
</dbReference>
<dbReference type="SUPFAM" id="SSF48065">
    <property type="entry name" value="DBL homology domain (DH-domain)"/>
    <property type="match status" value="1"/>
</dbReference>
<dbReference type="SUPFAM" id="SSF50729">
    <property type="entry name" value="PH domain-like"/>
    <property type="match status" value="3"/>
</dbReference>
<dbReference type="PROSITE" id="PS50115">
    <property type="entry name" value="ARFGAP"/>
    <property type="match status" value="1"/>
</dbReference>
<dbReference type="PROSITE" id="PS50021">
    <property type="entry name" value="CH"/>
    <property type="match status" value="1"/>
</dbReference>
<dbReference type="PROSITE" id="PS00741">
    <property type="entry name" value="DH_1"/>
    <property type="match status" value="1"/>
</dbReference>
<dbReference type="PROSITE" id="PS50010">
    <property type="entry name" value="DH_2"/>
    <property type="match status" value="1"/>
</dbReference>
<dbReference type="PROSITE" id="PS50096">
    <property type="entry name" value="IQ"/>
    <property type="match status" value="2"/>
</dbReference>
<dbReference type="PROSITE" id="PS50003">
    <property type="entry name" value="PH_DOMAIN"/>
    <property type="match status" value="2"/>
</dbReference>
<reference key="1">
    <citation type="journal article" date="2005" name="Nature">
        <title>The genome of the social amoeba Dictyostelium discoideum.</title>
        <authorList>
            <person name="Eichinger L."/>
            <person name="Pachebat J.A."/>
            <person name="Gloeckner G."/>
            <person name="Rajandream M.A."/>
            <person name="Sucgang R."/>
            <person name="Berriman M."/>
            <person name="Song J."/>
            <person name="Olsen R."/>
            <person name="Szafranski K."/>
            <person name="Xu Q."/>
            <person name="Tunggal B."/>
            <person name="Kummerfeld S."/>
            <person name="Madera M."/>
            <person name="Konfortov B.A."/>
            <person name="Rivero F."/>
            <person name="Bankier A.T."/>
            <person name="Lehmann R."/>
            <person name="Hamlin N."/>
            <person name="Davies R."/>
            <person name="Gaudet P."/>
            <person name="Fey P."/>
            <person name="Pilcher K."/>
            <person name="Chen G."/>
            <person name="Saunders D."/>
            <person name="Sodergren E.J."/>
            <person name="Davis P."/>
            <person name="Kerhornou A."/>
            <person name="Nie X."/>
            <person name="Hall N."/>
            <person name="Anjard C."/>
            <person name="Hemphill L."/>
            <person name="Bason N."/>
            <person name="Farbrother P."/>
            <person name="Desany B."/>
            <person name="Just E."/>
            <person name="Morio T."/>
            <person name="Rost R."/>
            <person name="Churcher C.M."/>
            <person name="Cooper J."/>
            <person name="Haydock S."/>
            <person name="van Driessche N."/>
            <person name="Cronin A."/>
            <person name="Goodhead I."/>
            <person name="Muzny D.M."/>
            <person name="Mourier T."/>
            <person name="Pain A."/>
            <person name="Lu M."/>
            <person name="Harper D."/>
            <person name="Lindsay R."/>
            <person name="Hauser H."/>
            <person name="James K.D."/>
            <person name="Quiles M."/>
            <person name="Madan Babu M."/>
            <person name="Saito T."/>
            <person name="Buchrieser C."/>
            <person name="Wardroper A."/>
            <person name="Felder M."/>
            <person name="Thangavelu M."/>
            <person name="Johnson D."/>
            <person name="Knights A."/>
            <person name="Loulseged H."/>
            <person name="Mungall K.L."/>
            <person name="Oliver K."/>
            <person name="Price C."/>
            <person name="Quail M.A."/>
            <person name="Urushihara H."/>
            <person name="Hernandez J."/>
            <person name="Rabbinowitsch E."/>
            <person name="Steffen D."/>
            <person name="Sanders M."/>
            <person name="Ma J."/>
            <person name="Kohara Y."/>
            <person name="Sharp S."/>
            <person name="Simmonds M.N."/>
            <person name="Spiegler S."/>
            <person name="Tivey A."/>
            <person name="Sugano S."/>
            <person name="White B."/>
            <person name="Walker D."/>
            <person name="Woodward J.R."/>
            <person name="Winckler T."/>
            <person name="Tanaka Y."/>
            <person name="Shaulsky G."/>
            <person name="Schleicher M."/>
            <person name="Weinstock G.M."/>
            <person name="Rosenthal A."/>
            <person name="Cox E.C."/>
            <person name="Chisholm R.L."/>
            <person name="Gibbs R.A."/>
            <person name="Loomis W.F."/>
            <person name="Platzer M."/>
            <person name="Kay R.R."/>
            <person name="Williams J.G."/>
            <person name="Dear P.H."/>
            <person name="Noegel A.A."/>
            <person name="Barrell B.G."/>
            <person name="Kuspa A."/>
        </authorList>
    </citation>
    <scope>NUCLEOTIDE SEQUENCE [LARGE SCALE GENOMIC DNA]</scope>
    <scope>ALTERNATIVE SPLICING (ISOFORMS 1 AND 2)</scope>
    <source>
        <strain>AX4</strain>
    </source>
</reference>
<reference key="2">
    <citation type="journal article" date="2007" name="BMC Cell Biol.">
        <title>GxcDD, a putative RacGEF, is involved in Dictyostelium development.</title>
        <authorList>
            <person name="Mondal S."/>
            <person name="Neelamegan D."/>
            <person name="Rivero F."/>
            <person name="Noegel A.A."/>
        </authorList>
    </citation>
    <scope>FUNCTION</scope>
    <scope>SUBCELLULAR LOCATION</scope>
    <scope>DOMAIN CH</scope>
    <scope>DISRUPTION PHENOTYPE</scope>
</reference>
<evidence type="ECO:0000255" key="1">
    <source>
        <dbReference type="PROSITE-ProRule" id="PRU00044"/>
    </source>
</evidence>
<evidence type="ECO:0000255" key="2">
    <source>
        <dbReference type="PROSITE-ProRule" id="PRU00062"/>
    </source>
</evidence>
<evidence type="ECO:0000255" key="3">
    <source>
        <dbReference type="PROSITE-ProRule" id="PRU00116"/>
    </source>
</evidence>
<evidence type="ECO:0000255" key="4">
    <source>
        <dbReference type="PROSITE-ProRule" id="PRU00145"/>
    </source>
</evidence>
<evidence type="ECO:0000255" key="5">
    <source>
        <dbReference type="PROSITE-ProRule" id="PRU00288"/>
    </source>
</evidence>
<evidence type="ECO:0000256" key="6">
    <source>
        <dbReference type="SAM" id="MobiDB-lite"/>
    </source>
</evidence>
<evidence type="ECO:0000269" key="7">
    <source>
    </source>
</evidence>
<evidence type="ECO:0000305" key="8"/>
<accession>Q1ZXH8</accession>
<name>GXCDD_DICDI</name>
<protein>
    <recommendedName>
        <fullName>Guanine exchange factor for Rac 30</fullName>
    </recommendedName>
</protein>
<keyword id="KW-0025">Alternative splicing</keyword>
<keyword id="KW-0968">Cytoplasmic vesicle</keyword>
<keyword id="KW-0343">GTPase activation</keyword>
<keyword id="KW-0472">Membrane</keyword>
<keyword id="KW-0479">Metal-binding</keyword>
<keyword id="KW-1185">Reference proteome</keyword>
<keyword id="KW-0677">Repeat</keyword>
<keyword id="KW-0862">Zinc</keyword>
<keyword id="KW-0863">Zinc-finger</keyword>
<proteinExistence type="predicted"/>
<feature type="chain" id="PRO_0000327580" description="Guanine exchange factor for Rac 30">
    <location>
        <begin position="1"/>
        <end position="1632"/>
    </location>
</feature>
<feature type="domain" description="Calponin-homology (CH)" evidence="1">
    <location>
        <begin position="16"/>
        <end position="122"/>
    </location>
</feature>
<feature type="domain" description="IQ 1" evidence="3">
    <location>
        <begin position="388"/>
        <end position="417"/>
    </location>
</feature>
<feature type="domain" description="IQ 2" evidence="3">
    <location>
        <begin position="432"/>
        <end position="461"/>
    </location>
</feature>
<feature type="domain" description="DH" evidence="2">
    <location>
        <begin position="460"/>
        <end position="638"/>
    </location>
</feature>
<feature type="domain" description="PH 1" evidence="4">
    <location>
        <begin position="940"/>
        <end position="1038"/>
    </location>
</feature>
<feature type="domain" description="Arf-GAP" evidence="5">
    <location>
        <begin position="1271"/>
        <end position="1389"/>
    </location>
</feature>
<feature type="domain" description="PH 2" evidence="4">
    <location>
        <begin position="1532"/>
        <end position="1631"/>
    </location>
</feature>
<feature type="zinc finger region" description="C4-type" evidence="5">
    <location>
        <begin position="1286"/>
        <end position="1309"/>
    </location>
</feature>
<feature type="region of interest" description="Disordered" evidence="6">
    <location>
        <begin position="134"/>
        <end position="155"/>
    </location>
</feature>
<feature type="region of interest" description="Disordered" evidence="6">
    <location>
        <begin position="171"/>
        <end position="285"/>
    </location>
</feature>
<feature type="region of interest" description="Disordered" evidence="6">
    <location>
        <begin position="775"/>
        <end position="798"/>
    </location>
</feature>
<feature type="region of interest" description="Disordered" evidence="6">
    <location>
        <begin position="1138"/>
        <end position="1161"/>
    </location>
</feature>
<feature type="region of interest" description="Disordered" evidence="6">
    <location>
        <begin position="1380"/>
        <end position="1521"/>
    </location>
</feature>
<feature type="compositionally biased region" description="Low complexity" evidence="6">
    <location>
        <begin position="137"/>
        <end position="154"/>
    </location>
</feature>
<feature type="compositionally biased region" description="Low complexity" evidence="6">
    <location>
        <begin position="180"/>
        <end position="284"/>
    </location>
</feature>
<feature type="compositionally biased region" description="Low complexity" evidence="6">
    <location>
        <begin position="775"/>
        <end position="795"/>
    </location>
</feature>
<feature type="compositionally biased region" description="Low complexity" evidence="6">
    <location>
        <begin position="1138"/>
        <end position="1156"/>
    </location>
</feature>
<feature type="compositionally biased region" description="Low complexity" evidence="6">
    <location>
        <begin position="1380"/>
        <end position="1402"/>
    </location>
</feature>
<feature type="compositionally biased region" description="Low complexity" evidence="6">
    <location>
        <begin position="1409"/>
        <end position="1431"/>
    </location>
</feature>
<feature type="compositionally biased region" description="Low complexity" evidence="6">
    <location>
        <begin position="1441"/>
        <end position="1481"/>
    </location>
</feature>
<feature type="compositionally biased region" description="Polar residues" evidence="6">
    <location>
        <begin position="1500"/>
        <end position="1515"/>
    </location>
</feature>
<feature type="splice variant" id="VSP_041271" description="In isoform 2." evidence="8">
    <original>VLYHINNFISTSTSTSASQSQSQSPSPSPSHSINQKQKIRKLSFYQSRSNTLININNDEDRLNSFPTSTLSVSCLLNNDNHGNNDFDGKSFTNNIDITTTTTTNDDNNNNTTTTQVKKGKDLSCSKELNCSISHDDNSKGSSGYGNNSCGDNINNDES</original>
    <variation>DSILNIPG</variation>
    <location>
        <begin position="1125"/>
        <end position="1282"/>
    </location>
</feature>
<comment type="function">
    <text evidence="7">GTPase-activating protein for Rac involved in streaming and development.</text>
</comment>
<comment type="subcellular location">
    <subcellularLocation>
        <location evidence="7">Membrane</location>
        <topology evidence="7">Peripheral membrane protein</topology>
    </subcellularLocation>
    <subcellularLocation>
        <location evidence="7">Cytoplasmic vesicle</location>
        <location evidence="7">Phagosome membrane</location>
        <topology evidence="7">Peripheral membrane protein</topology>
    </subcellularLocation>
    <text>Accumulates in cortical regions of the cell and on phagosomes.</text>
</comment>
<comment type="alternative products">
    <event type="alternative splicing"/>
    <isoform>
        <id>Q1ZXH8-1</id>
        <name>1</name>
        <sequence type="displayed"/>
    </isoform>
    <isoform>
        <id>Q1ZXH8-2</id>
        <name>2</name>
        <sequence type="described" ref="VSP_041271"/>
    </isoform>
</comment>
<comment type="domain">
    <text evidence="7">The membrane association is mediated by the calponin-homology (CH) domain.</text>
</comment>
<comment type="disruption phenotype">
    <text evidence="7">Cells display defective streaming during development under different conditions and a delay in developmental timing.</text>
</comment>
<comment type="sequence caution" evidence="8">
    <conflict type="erroneous gene model prediction">
        <sequence resource="EMBL-CDS" id="EAS66880"/>
    </conflict>
</comment>